<keyword id="KW-0010">Activator</keyword>
<keyword id="KW-0963">Cytoplasm</keyword>
<keyword id="KW-0238">DNA-binding</keyword>
<keyword id="KW-0597">Phosphoprotein</keyword>
<keyword id="KW-0804">Transcription</keyword>
<keyword id="KW-0805">Transcription regulation</keyword>
<keyword id="KW-0902">Two-component regulatory system</keyword>
<keyword id="KW-0843">Virulence</keyword>
<sequence>MVQCLVVDDDPRILNYIASHLQTEHIDAYTQPSGEAALKLLEKQRVDIAVVDIMMDGMDGFQLCNTLKNDYDIPVIMLTARDALSDKERAFISGTDDYVTKPFEVKELIFRIRAVLRRYNINSNSEMTIGNLTLNQSYLELQVSNKTMTLPNKEFQLLFMLAARPKQIFTREQIIEKIWGYDYEGDERTVDVHIKRLRQRLKKLNATLTIETVRGQGYKVENHV</sequence>
<protein>
    <recommendedName>
        <fullName>Heme response regulator HssR</fullName>
    </recommendedName>
</protein>
<organism>
    <name type="scientific">Staphylococcus aureus (strain JH9)</name>
    <dbReference type="NCBI Taxonomy" id="359786"/>
    <lineage>
        <taxon>Bacteria</taxon>
        <taxon>Bacillati</taxon>
        <taxon>Bacillota</taxon>
        <taxon>Bacilli</taxon>
        <taxon>Bacillales</taxon>
        <taxon>Staphylococcaceae</taxon>
        <taxon>Staphylococcus</taxon>
    </lineage>
</organism>
<dbReference type="EMBL" id="CP000703">
    <property type="protein sequence ID" value="ABQ50165.1"/>
    <property type="molecule type" value="Genomic_DNA"/>
</dbReference>
<dbReference type="RefSeq" id="WP_000249497.1">
    <property type="nucleotide sequence ID" value="NC_009487.1"/>
</dbReference>
<dbReference type="SMR" id="A5IVE2"/>
<dbReference type="KEGG" id="saj:SaurJH9_2385"/>
<dbReference type="HOGENOM" id="CLU_000445_30_3_9"/>
<dbReference type="GO" id="GO:0005829">
    <property type="term" value="C:cytosol"/>
    <property type="evidence" value="ECO:0007669"/>
    <property type="project" value="TreeGrafter"/>
</dbReference>
<dbReference type="GO" id="GO:0032993">
    <property type="term" value="C:protein-DNA complex"/>
    <property type="evidence" value="ECO:0007669"/>
    <property type="project" value="TreeGrafter"/>
</dbReference>
<dbReference type="GO" id="GO:0000156">
    <property type="term" value="F:phosphorelay response regulator activity"/>
    <property type="evidence" value="ECO:0007669"/>
    <property type="project" value="TreeGrafter"/>
</dbReference>
<dbReference type="GO" id="GO:0000976">
    <property type="term" value="F:transcription cis-regulatory region binding"/>
    <property type="evidence" value="ECO:0007669"/>
    <property type="project" value="TreeGrafter"/>
</dbReference>
<dbReference type="GO" id="GO:0006355">
    <property type="term" value="P:regulation of DNA-templated transcription"/>
    <property type="evidence" value="ECO:0007669"/>
    <property type="project" value="InterPro"/>
</dbReference>
<dbReference type="CDD" id="cd17574">
    <property type="entry name" value="REC_OmpR"/>
    <property type="match status" value="1"/>
</dbReference>
<dbReference type="CDD" id="cd00383">
    <property type="entry name" value="trans_reg_C"/>
    <property type="match status" value="1"/>
</dbReference>
<dbReference type="FunFam" id="1.10.10.10:FF:000018">
    <property type="entry name" value="DNA-binding response regulator ResD"/>
    <property type="match status" value="1"/>
</dbReference>
<dbReference type="Gene3D" id="3.40.50.2300">
    <property type="match status" value="1"/>
</dbReference>
<dbReference type="Gene3D" id="6.10.250.690">
    <property type="match status" value="1"/>
</dbReference>
<dbReference type="Gene3D" id="1.10.10.10">
    <property type="entry name" value="Winged helix-like DNA-binding domain superfamily/Winged helix DNA-binding domain"/>
    <property type="match status" value="1"/>
</dbReference>
<dbReference type="InterPro" id="IPR011006">
    <property type="entry name" value="CheY-like_superfamily"/>
</dbReference>
<dbReference type="InterPro" id="IPR001867">
    <property type="entry name" value="OmpR/PhoB-type_DNA-bd"/>
</dbReference>
<dbReference type="InterPro" id="IPR001789">
    <property type="entry name" value="Sig_transdc_resp-reg_receiver"/>
</dbReference>
<dbReference type="InterPro" id="IPR039420">
    <property type="entry name" value="WalR-like"/>
</dbReference>
<dbReference type="InterPro" id="IPR036388">
    <property type="entry name" value="WH-like_DNA-bd_sf"/>
</dbReference>
<dbReference type="PANTHER" id="PTHR48111:SF49">
    <property type="entry name" value="HEME RESPONSE REGULATOR HSSR"/>
    <property type="match status" value="1"/>
</dbReference>
<dbReference type="PANTHER" id="PTHR48111">
    <property type="entry name" value="REGULATOR OF RPOS"/>
    <property type="match status" value="1"/>
</dbReference>
<dbReference type="Pfam" id="PF00072">
    <property type="entry name" value="Response_reg"/>
    <property type="match status" value="1"/>
</dbReference>
<dbReference type="Pfam" id="PF00486">
    <property type="entry name" value="Trans_reg_C"/>
    <property type="match status" value="1"/>
</dbReference>
<dbReference type="SMART" id="SM00448">
    <property type="entry name" value="REC"/>
    <property type="match status" value="1"/>
</dbReference>
<dbReference type="SMART" id="SM00862">
    <property type="entry name" value="Trans_reg_C"/>
    <property type="match status" value="1"/>
</dbReference>
<dbReference type="SUPFAM" id="SSF52172">
    <property type="entry name" value="CheY-like"/>
    <property type="match status" value="1"/>
</dbReference>
<dbReference type="PROSITE" id="PS51755">
    <property type="entry name" value="OMPR_PHOB"/>
    <property type="match status" value="1"/>
</dbReference>
<dbReference type="PROSITE" id="PS50110">
    <property type="entry name" value="RESPONSE_REGULATORY"/>
    <property type="match status" value="1"/>
</dbReference>
<proteinExistence type="inferred from homology"/>
<accession>A5IVE2</accession>
<comment type="function">
    <text evidence="1">Member of the two-component regulatory system HssS/HssR involved in intracellular heme homeostasis and tempering of staphylococcal virulence. Phosphorylated HssR binds to a direct repeat sequence within hrtAB promoter and activates the expression of hrtAB, an efflux pump, in response to extracellular heme, hemin, hemoglobin or blood (By similarity).</text>
</comment>
<comment type="subcellular location">
    <subcellularLocation>
        <location evidence="4">Cytoplasm</location>
    </subcellularLocation>
</comment>
<comment type="PTM">
    <text evidence="1">Phosphorylated by HssS.</text>
</comment>
<name>HSSR_STAA9</name>
<reference key="1">
    <citation type="submission" date="2007-05" db="EMBL/GenBank/DDBJ databases">
        <title>Complete sequence of chromosome of Staphylococcus aureus subsp. aureus JH9.</title>
        <authorList>
            <consortium name="US DOE Joint Genome Institute"/>
            <person name="Copeland A."/>
            <person name="Lucas S."/>
            <person name="Lapidus A."/>
            <person name="Barry K."/>
            <person name="Detter J.C."/>
            <person name="Glavina del Rio T."/>
            <person name="Hammon N."/>
            <person name="Israni S."/>
            <person name="Pitluck S."/>
            <person name="Chain P."/>
            <person name="Malfatti S."/>
            <person name="Shin M."/>
            <person name="Vergez L."/>
            <person name="Schmutz J."/>
            <person name="Larimer F."/>
            <person name="Land M."/>
            <person name="Hauser L."/>
            <person name="Kyrpides N."/>
            <person name="Kim E."/>
            <person name="Tomasz A."/>
            <person name="Richardson P."/>
        </authorList>
    </citation>
    <scope>NUCLEOTIDE SEQUENCE [LARGE SCALE GENOMIC DNA]</scope>
    <source>
        <strain>JH9</strain>
    </source>
</reference>
<evidence type="ECO:0000250" key="1"/>
<evidence type="ECO:0000255" key="2">
    <source>
        <dbReference type="PROSITE-ProRule" id="PRU00169"/>
    </source>
</evidence>
<evidence type="ECO:0000255" key="3">
    <source>
        <dbReference type="PROSITE-ProRule" id="PRU01091"/>
    </source>
</evidence>
<evidence type="ECO:0000305" key="4"/>
<feature type="chain" id="PRO_0000331322" description="Heme response regulator HssR">
    <location>
        <begin position="1"/>
        <end position="224"/>
    </location>
</feature>
<feature type="domain" description="Response regulatory" evidence="2">
    <location>
        <begin position="3"/>
        <end position="116"/>
    </location>
</feature>
<feature type="DNA-binding region" description="OmpR/PhoB-type" evidence="3">
    <location>
        <begin position="124"/>
        <end position="222"/>
    </location>
</feature>
<feature type="modified residue" description="4-aspartylphosphate" evidence="2">
    <location>
        <position position="52"/>
    </location>
</feature>
<gene>
    <name type="primary">hssR</name>
    <name type="ordered locus">SaurJH9_2385</name>
</gene>